<keyword id="KW-0143">Chaperone</keyword>
<keyword id="KW-0963">Cytoplasm</keyword>
<keyword id="KW-1015">Disulfide bond</keyword>
<keyword id="KW-0676">Redox-active center</keyword>
<keyword id="KW-0862">Zinc</keyword>
<protein>
    <recommendedName>
        <fullName evidence="1">33 kDa chaperonin</fullName>
    </recommendedName>
    <alternativeName>
        <fullName evidence="1">Heat shock protein 33 homolog</fullName>
        <shortName evidence="1">HSP33</shortName>
    </alternativeName>
</protein>
<organism>
    <name type="scientific">Shewanella baltica (strain OS185)</name>
    <dbReference type="NCBI Taxonomy" id="402882"/>
    <lineage>
        <taxon>Bacteria</taxon>
        <taxon>Pseudomonadati</taxon>
        <taxon>Pseudomonadota</taxon>
        <taxon>Gammaproteobacteria</taxon>
        <taxon>Alteromonadales</taxon>
        <taxon>Shewanellaceae</taxon>
        <taxon>Shewanella</taxon>
    </lineage>
</organism>
<reference key="1">
    <citation type="submission" date="2007-07" db="EMBL/GenBank/DDBJ databases">
        <title>Complete sequence of chromosome of Shewanella baltica OS185.</title>
        <authorList>
            <consortium name="US DOE Joint Genome Institute"/>
            <person name="Copeland A."/>
            <person name="Lucas S."/>
            <person name="Lapidus A."/>
            <person name="Barry K."/>
            <person name="Glavina del Rio T."/>
            <person name="Dalin E."/>
            <person name="Tice H."/>
            <person name="Pitluck S."/>
            <person name="Sims D."/>
            <person name="Brettin T."/>
            <person name="Bruce D."/>
            <person name="Detter J.C."/>
            <person name="Han C."/>
            <person name="Schmutz J."/>
            <person name="Larimer F."/>
            <person name="Land M."/>
            <person name="Hauser L."/>
            <person name="Kyrpides N."/>
            <person name="Mikhailova N."/>
            <person name="Brettar I."/>
            <person name="Rodrigues J."/>
            <person name="Konstantinidis K."/>
            <person name="Tiedje J."/>
            <person name="Richardson P."/>
        </authorList>
    </citation>
    <scope>NUCLEOTIDE SEQUENCE [LARGE SCALE GENOMIC DNA]</scope>
    <source>
        <strain>OS185</strain>
    </source>
</reference>
<comment type="function">
    <text evidence="1">Redox regulated molecular chaperone. Protects both thermally unfolding and oxidatively damaged proteins from irreversible aggregation. Plays an important role in the bacterial defense system toward oxidative stress.</text>
</comment>
<comment type="subcellular location">
    <subcellularLocation>
        <location evidence="1">Cytoplasm</location>
    </subcellularLocation>
</comment>
<comment type="PTM">
    <text evidence="1">Under oxidizing conditions two disulfide bonds are formed involving the reactive cysteines. Under reducing conditions zinc is bound to the reactive cysteines and the protein is inactive.</text>
</comment>
<comment type="similarity">
    <text evidence="1">Belongs to the HSP33 family.</text>
</comment>
<sequence>MNQDTLHRYLFDNADVRGELVQLQDSYQQVISAQEYPAVLQVLLGELMAATSLLTATLKFSGDISVQLQGNGPVSLAVINGNNLQELRGVARWNAELADDASLTDLFGQGYMVITLTPDEGERYQGVVALDKPTLAACVEEYFNQSEQLPTGIWLFADGKQAAGMFLQILPSKEDHNPDFEHLSQLTSTIKAEELFTLDAESVLHRLYHQEEVRLFDPIDVSFKCTCSHERSAGAIKTLDQAEIEAILAEDGKIEMGCEYCHAKYIFDAIDVAALFANGQTSTTQQ</sequence>
<gene>
    <name evidence="1" type="primary">hslO</name>
    <name type="ordered locus">Shew185_0146</name>
</gene>
<dbReference type="EMBL" id="CP000753">
    <property type="protein sequence ID" value="ABS06317.1"/>
    <property type="molecule type" value="Genomic_DNA"/>
</dbReference>
<dbReference type="RefSeq" id="WP_006084926.1">
    <property type="nucleotide sequence ID" value="NC_009665.1"/>
</dbReference>
<dbReference type="SMR" id="A6WHM8"/>
<dbReference type="GeneID" id="11770510"/>
<dbReference type="KEGG" id="sbm:Shew185_0146"/>
<dbReference type="HOGENOM" id="CLU_054493_0_0_6"/>
<dbReference type="GO" id="GO:0005737">
    <property type="term" value="C:cytoplasm"/>
    <property type="evidence" value="ECO:0007669"/>
    <property type="project" value="UniProtKB-SubCell"/>
</dbReference>
<dbReference type="GO" id="GO:0044183">
    <property type="term" value="F:protein folding chaperone"/>
    <property type="evidence" value="ECO:0007669"/>
    <property type="project" value="TreeGrafter"/>
</dbReference>
<dbReference type="GO" id="GO:0051082">
    <property type="term" value="F:unfolded protein binding"/>
    <property type="evidence" value="ECO:0007669"/>
    <property type="project" value="UniProtKB-UniRule"/>
</dbReference>
<dbReference type="GO" id="GO:0042026">
    <property type="term" value="P:protein refolding"/>
    <property type="evidence" value="ECO:0007669"/>
    <property type="project" value="TreeGrafter"/>
</dbReference>
<dbReference type="CDD" id="cd00498">
    <property type="entry name" value="Hsp33"/>
    <property type="match status" value="1"/>
</dbReference>
<dbReference type="Gene3D" id="1.10.287.480">
    <property type="entry name" value="helix hairpin bin"/>
    <property type="match status" value="1"/>
</dbReference>
<dbReference type="Gene3D" id="3.55.30.10">
    <property type="entry name" value="Hsp33 domain"/>
    <property type="match status" value="1"/>
</dbReference>
<dbReference type="Gene3D" id="3.90.1280.10">
    <property type="entry name" value="HSP33 redox switch-like"/>
    <property type="match status" value="1"/>
</dbReference>
<dbReference type="HAMAP" id="MF_00117">
    <property type="entry name" value="HslO"/>
    <property type="match status" value="1"/>
</dbReference>
<dbReference type="InterPro" id="IPR000397">
    <property type="entry name" value="Heat_shock_Hsp33"/>
</dbReference>
<dbReference type="InterPro" id="IPR016154">
    <property type="entry name" value="Heat_shock_Hsp33_C"/>
</dbReference>
<dbReference type="InterPro" id="IPR016153">
    <property type="entry name" value="Heat_shock_Hsp33_N"/>
</dbReference>
<dbReference type="InterPro" id="IPR023212">
    <property type="entry name" value="Hsp33_helix_hairpin_bin_dom_sf"/>
</dbReference>
<dbReference type="NCBIfam" id="NF001033">
    <property type="entry name" value="PRK00114.1"/>
    <property type="match status" value="1"/>
</dbReference>
<dbReference type="PANTHER" id="PTHR30111">
    <property type="entry name" value="33 KDA CHAPERONIN"/>
    <property type="match status" value="1"/>
</dbReference>
<dbReference type="PANTHER" id="PTHR30111:SF1">
    <property type="entry name" value="33 KDA CHAPERONIN"/>
    <property type="match status" value="1"/>
</dbReference>
<dbReference type="Pfam" id="PF01430">
    <property type="entry name" value="HSP33"/>
    <property type="match status" value="1"/>
</dbReference>
<dbReference type="PIRSF" id="PIRSF005261">
    <property type="entry name" value="Heat_shock_Hsp33"/>
    <property type="match status" value="1"/>
</dbReference>
<dbReference type="SUPFAM" id="SSF64397">
    <property type="entry name" value="Hsp33 domain"/>
    <property type="match status" value="1"/>
</dbReference>
<dbReference type="SUPFAM" id="SSF118352">
    <property type="entry name" value="HSP33 redox switch-like"/>
    <property type="match status" value="1"/>
</dbReference>
<name>HSLO_SHEB8</name>
<accession>A6WHM8</accession>
<evidence type="ECO:0000255" key="1">
    <source>
        <dbReference type="HAMAP-Rule" id="MF_00117"/>
    </source>
</evidence>
<proteinExistence type="inferred from homology"/>
<feature type="chain" id="PRO_1000015564" description="33 kDa chaperonin">
    <location>
        <begin position="1"/>
        <end position="286"/>
    </location>
</feature>
<feature type="disulfide bond" description="Redox-active" evidence="1">
    <location>
        <begin position="225"/>
        <end position="227"/>
    </location>
</feature>
<feature type="disulfide bond" description="Redox-active" evidence="1">
    <location>
        <begin position="258"/>
        <end position="261"/>
    </location>
</feature>